<feature type="initiator methionine" description="Removed" evidence="2">
    <location>
        <position position="1"/>
    </location>
</feature>
<feature type="propeptide" id="PRO_0000008916" evidence="1">
    <location>
        <begin position="2"/>
        <end position="15"/>
    </location>
</feature>
<feature type="chain" id="PRO_0000008917" description="Fibroblast growth factor 1">
    <location>
        <begin position="16"/>
        <end position="155"/>
    </location>
</feature>
<feature type="region of interest" description="Heparin-binding" evidence="1">
    <location>
        <begin position="127"/>
        <end position="143"/>
    </location>
</feature>
<feature type="binding site" evidence="1">
    <location>
        <position position="33"/>
    </location>
    <ligand>
        <name>heparin</name>
        <dbReference type="ChEBI" id="CHEBI:28304"/>
    </ligand>
</feature>
<feature type="modified residue" description="N-acetylalanine" evidence="2">
    <location>
        <position position="2"/>
    </location>
</feature>
<feature type="strand" evidence="6">
    <location>
        <begin position="27"/>
        <end position="31"/>
    </location>
</feature>
<feature type="turn" evidence="6">
    <location>
        <begin position="32"/>
        <end position="35"/>
    </location>
</feature>
<feature type="strand" evidence="6">
    <location>
        <begin position="36"/>
        <end position="40"/>
    </location>
</feature>
<feature type="strand" evidence="6">
    <location>
        <begin position="44"/>
        <end position="50"/>
    </location>
</feature>
<feature type="helix" evidence="7">
    <location>
        <begin position="55"/>
        <end position="57"/>
    </location>
</feature>
<feature type="strand" evidence="6">
    <location>
        <begin position="59"/>
        <end position="65"/>
    </location>
</feature>
<feature type="strand" evidence="6">
    <location>
        <begin position="68"/>
        <end position="73"/>
    </location>
</feature>
<feature type="turn" evidence="6">
    <location>
        <begin position="74"/>
        <end position="76"/>
    </location>
</feature>
<feature type="strand" evidence="6">
    <location>
        <begin position="79"/>
        <end position="82"/>
    </location>
</feature>
<feature type="strand" evidence="6">
    <location>
        <begin position="88"/>
        <end position="93"/>
    </location>
</feature>
<feature type="helix" evidence="6">
    <location>
        <begin position="96"/>
        <end position="98"/>
    </location>
</feature>
<feature type="strand" evidence="6">
    <location>
        <begin position="100"/>
        <end position="104"/>
    </location>
</feature>
<feature type="strand" evidence="6">
    <location>
        <begin position="110"/>
        <end position="115"/>
    </location>
</feature>
<feature type="helix" evidence="6">
    <location>
        <begin position="118"/>
        <end position="120"/>
    </location>
</feature>
<feature type="strand" evidence="6">
    <location>
        <begin position="130"/>
        <end position="132"/>
    </location>
</feature>
<feature type="helix" evidence="6">
    <location>
        <begin position="135"/>
        <end position="137"/>
    </location>
</feature>
<feature type="helix" evidence="6">
    <location>
        <begin position="143"/>
        <end position="145"/>
    </location>
</feature>
<feature type="strand" evidence="6">
    <location>
        <begin position="147"/>
        <end position="151"/>
    </location>
</feature>
<proteinExistence type="evidence at protein level"/>
<organism>
    <name type="scientific">Rattus norvegicus</name>
    <name type="common">Rat</name>
    <dbReference type="NCBI Taxonomy" id="10116"/>
    <lineage>
        <taxon>Eukaryota</taxon>
        <taxon>Metazoa</taxon>
        <taxon>Chordata</taxon>
        <taxon>Craniata</taxon>
        <taxon>Vertebrata</taxon>
        <taxon>Euteleostomi</taxon>
        <taxon>Mammalia</taxon>
        <taxon>Eutheria</taxon>
        <taxon>Euarchontoglires</taxon>
        <taxon>Glires</taxon>
        <taxon>Rodentia</taxon>
        <taxon>Myomorpha</taxon>
        <taxon>Muroidea</taxon>
        <taxon>Muridae</taxon>
        <taxon>Murinae</taxon>
        <taxon>Rattus</taxon>
    </lineage>
</organism>
<comment type="function">
    <text evidence="3">Plays an important role in the regulation of cell survival, cell division, angiogenesis, cell differentiation and cell migration. Functions as a potent mitogen in vitro. Acts as a ligand for FGFR1 and integrins. Binds to FGFR1 in the presence of heparin leading to FGFR1 dimerization and activation via sequential autophosphorylation on tyrosine residues which act as docking sites for interacting proteins, leading to the activation of several signaling cascades. Binds to integrin ITGAV:ITGB3. Its binding to integrin, subsequent ternary complex formation with integrin and FGFR1, and the recruitment of PTPN11 to the complex are essential for FGF1 signaling. Induces the phosphorylation and activation of FGFR1, FRS2, MAPK3/ERK1, MAPK1/ERK2 and AKT1. Can induce angiogenesis.</text>
</comment>
<comment type="subunit">
    <text evidence="3">Monomer. Homodimer. Interacts with FGFR1, FGFR2, FGFR3 and FGFR4. Affinity between fibroblast growth factors (FGFs) and their receptors is increased by heparan sulfate glycosaminoglycans that function as coreceptors. Found in a complex with FGFBP1, FGF1 and FGF2. Interacts with FGFBP1. Part of a Cu(2+)-dependent multiprotein aggregate containing FGF1, S100A13 and SYT1. Interacts with SYT1. Interacts with S100A13 (By similarity). Interacts with LRRC59 (By similarity). Interacts with CSNKA, CSNKB and FIBP (By similarity). While binding with LRRC59, CSNKA and FIBP seem mutually exclusive, CSNKB and FIBP may cooperatively interact with FGF1. Forms a ternary complex with FGFR1 and ITGAV:ITGB3 and induces the recruitment of PTPN11 to the complex (By similarity).</text>
</comment>
<comment type="subcellular location">
    <subcellularLocation>
        <location evidence="4">Secreted</location>
    </subcellularLocation>
    <subcellularLocation>
        <location evidence="1">Cytoplasm</location>
    </subcellularLocation>
    <subcellularLocation>
        <location evidence="1">Cytoplasm</location>
        <location evidence="1">Cell cortex</location>
    </subcellularLocation>
    <subcellularLocation>
        <location evidence="1">Cytoplasm</location>
        <location evidence="1">Cytosol</location>
    </subcellularLocation>
    <subcellularLocation>
        <location evidence="1">Nucleus</location>
    </subcellularLocation>
    <text evidence="1">Lacks a cleavable signal sequence. Within the cytoplasm, it is transported to the cell membrane and then secreted by a non-classical pathway that requires Cu(2+) ions and S100A13. Secreted in a complex with SYT1 (By similarity). Binding of exogenous FGF1 to FGFR facilitates endocytosis followed by translocation of FGF1 across endosomal membrane into the cytosol. Nuclear import from the cytosol requires the classical nuclear import machinery, involving proteins KPNA1 and KPNB1, as well as LRRC59 (By similarity).</text>
</comment>
<comment type="PTM">
    <text evidence="1">In the nucleus, phosphorylated by PKC/PRKCD.</text>
</comment>
<comment type="similarity">
    <text evidence="5">Belongs to the heparin-binding growth factors family.</text>
</comment>
<keyword id="KW-0002">3D-structure</keyword>
<keyword id="KW-0007">Acetylation</keyword>
<keyword id="KW-0037">Angiogenesis</keyword>
<keyword id="KW-0963">Cytoplasm</keyword>
<keyword id="KW-0217">Developmental protein</keyword>
<keyword id="KW-0221">Differentiation</keyword>
<keyword id="KW-0339">Growth factor</keyword>
<keyword id="KW-0358">Heparin-binding</keyword>
<keyword id="KW-0497">Mitogen</keyword>
<keyword id="KW-0539">Nucleus</keyword>
<keyword id="KW-0597">Phosphoprotein</keyword>
<keyword id="KW-1185">Reference proteome</keyword>
<keyword id="KW-0964">Secreted</keyword>
<gene>
    <name type="primary">Fgf1</name>
    <name type="synonym">Fgf-1</name>
    <name type="synonym">Fgfa</name>
</gene>
<dbReference type="EMBL" id="X14232">
    <property type="protein sequence ID" value="CAA32448.1"/>
    <property type="molecule type" value="mRNA"/>
</dbReference>
<dbReference type="PIR" id="S04147">
    <property type="entry name" value="S04147"/>
</dbReference>
<dbReference type="RefSeq" id="NP_036978.1">
    <property type="nucleotide sequence ID" value="NM_012846.2"/>
</dbReference>
<dbReference type="RefSeq" id="XP_006254712.1">
    <property type="nucleotide sequence ID" value="XM_006254650.5"/>
</dbReference>
<dbReference type="RefSeq" id="XP_006254713.1">
    <property type="nucleotide sequence ID" value="XM_006254651.5"/>
</dbReference>
<dbReference type="RefSeq" id="XP_006254714.1">
    <property type="nucleotide sequence ID" value="XM_006254652.5"/>
</dbReference>
<dbReference type="PDB" id="2J3P">
    <property type="method" value="X-ray"/>
    <property type="resolution" value="1.40 A"/>
    <property type="chains" value="A/B=22-155"/>
</dbReference>
<dbReference type="PDB" id="2UUS">
    <property type="method" value="X-ray"/>
    <property type="resolution" value="2.20 A"/>
    <property type="chains" value="A/B=22-153"/>
</dbReference>
<dbReference type="PDBsum" id="2J3P"/>
<dbReference type="PDBsum" id="2UUS"/>
<dbReference type="BMRB" id="P61149"/>
<dbReference type="SMR" id="P61149"/>
<dbReference type="BioGRID" id="247356">
    <property type="interactions" value="1"/>
</dbReference>
<dbReference type="FunCoup" id="P61149">
    <property type="interactions" value="891"/>
</dbReference>
<dbReference type="IntAct" id="P61149">
    <property type="interactions" value="2"/>
</dbReference>
<dbReference type="MINT" id="P61149"/>
<dbReference type="STRING" id="10116.ENSRNOP00000070685"/>
<dbReference type="PhosphoSitePlus" id="P61149"/>
<dbReference type="PaxDb" id="10116-ENSRNOP00000018577"/>
<dbReference type="Ensembl" id="ENSRNOT00000087408.2">
    <property type="protein sequence ID" value="ENSRNOP00000070685.1"/>
    <property type="gene ID" value="ENSRNOG00000013867.5"/>
</dbReference>
<dbReference type="GeneID" id="25317"/>
<dbReference type="KEGG" id="rno:25317"/>
<dbReference type="UCSC" id="RGD:2605">
    <property type="organism name" value="rat"/>
</dbReference>
<dbReference type="AGR" id="RGD:2605"/>
<dbReference type="CTD" id="2246"/>
<dbReference type="RGD" id="2605">
    <property type="gene designation" value="Fgf1"/>
</dbReference>
<dbReference type="eggNOG" id="KOG3885">
    <property type="taxonomic scope" value="Eukaryota"/>
</dbReference>
<dbReference type="GeneTree" id="ENSGT00940000160557"/>
<dbReference type="InParanoid" id="P61149"/>
<dbReference type="OMA" id="KSWFVGL"/>
<dbReference type="OrthoDB" id="5987799at2759"/>
<dbReference type="PhylomeDB" id="P61149"/>
<dbReference type="TreeFam" id="TF317805"/>
<dbReference type="Reactome" id="R-RNO-109704">
    <property type="pathway name" value="PI3K Cascade"/>
</dbReference>
<dbReference type="Reactome" id="R-RNO-1257604">
    <property type="pathway name" value="PIP3 activates AKT signaling"/>
</dbReference>
<dbReference type="Reactome" id="R-RNO-190322">
    <property type="pathway name" value="FGFR4 ligand binding and activation"/>
</dbReference>
<dbReference type="Reactome" id="R-RNO-190370">
    <property type="pathway name" value="FGFR1b ligand binding and activation"/>
</dbReference>
<dbReference type="Reactome" id="R-RNO-190371">
    <property type="pathway name" value="FGFR3b ligand binding and activation"/>
</dbReference>
<dbReference type="Reactome" id="R-RNO-190372">
    <property type="pathway name" value="FGFR3c ligand binding and activation"/>
</dbReference>
<dbReference type="Reactome" id="R-RNO-190373">
    <property type="pathway name" value="FGFR1c ligand binding and activation"/>
</dbReference>
<dbReference type="Reactome" id="R-RNO-190375">
    <property type="pathway name" value="FGFR2c ligand binding and activation"/>
</dbReference>
<dbReference type="Reactome" id="R-RNO-190377">
    <property type="pathway name" value="FGFR2b ligand binding and activation"/>
</dbReference>
<dbReference type="Reactome" id="R-RNO-5654219">
    <property type="pathway name" value="Phospholipase C-mediated cascade: FGFR1"/>
</dbReference>
<dbReference type="Reactome" id="R-RNO-5654221">
    <property type="pathway name" value="Phospholipase C-mediated cascade, FGFR2"/>
</dbReference>
<dbReference type="Reactome" id="R-RNO-5654227">
    <property type="pathway name" value="Phospholipase C-mediated cascade, FGFR3"/>
</dbReference>
<dbReference type="Reactome" id="R-RNO-5654228">
    <property type="pathway name" value="Phospholipase C-mediated cascade, FGFR4"/>
</dbReference>
<dbReference type="Reactome" id="R-RNO-5654687">
    <property type="pathway name" value="Downstream signaling of activated FGFR1"/>
</dbReference>
<dbReference type="Reactome" id="R-RNO-5654688">
    <property type="pathway name" value="SHC-mediated cascade:FGFR1"/>
</dbReference>
<dbReference type="Reactome" id="R-RNO-5654689">
    <property type="pathway name" value="PI-3K cascade:FGFR1"/>
</dbReference>
<dbReference type="Reactome" id="R-RNO-5654693">
    <property type="pathway name" value="FRS-mediated FGFR1 signaling"/>
</dbReference>
<dbReference type="Reactome" id="R-RNO-5654695">
    <property type="pathway name" value="PI-3K cascade:FGFR2"/>
</dbReference>
<dbReference type="Reactome" id="R-RNO-5654699">
    <property type="pathway name" value="SHC-mediated cascade:FGFR2"/>
</dbReference>
<dbReference type="Reactome" id="R-RNO-5654700">
    <property type="pathway name" value="FRS-mediated FGFR2 signaling"/>
</dbReference>
<dbReference type="Reactome" id="R-RNO-5654704">
    <property type="pathway name" value="SHC-mediated cascade:FGFR3"/>
</dbReference>
<dbReference type="Reactome" id="R-RNO-5654706">
    <property type="pathway name" value="FRS-mediated FGFR3 signaling"/>
</dbReference>
<dbReference type="Reactome" id="R-RNO-5654710">
    <property type="pathway name" value="PI-3K cascade:FGFR3"/>
</dbReference>
<dbReference type="Reactome" id="R-RNO-5654712">
    <property type="pathway name" value="FRS-mediated FGFR4 signaling"/>
</dbReference>
<dbReference type="Reactome" id="R-RNO-5654719">
    <property type="pathway name" value="SHC-mediated cascade:FGFR4"/>
</dbReference>
<dbReference type="Reactome" id="R-RNO-5654720">
    <property type="pathway name" value="PI-3K cascade:FGFR4"/>
</dbReference>
<dbReference type="Reactome" id="R-RNO-5654726">
    <property type="pathway name" value="Negative regulation of FGFR1 signaling"/>
</dbReference>
<dbReference type="Reactome" id="R-RNO-5654727">
    <property type="pathway name" value="Negative regulation of FGFR2 signaling"/>
</dbReference>
<dbReference type="Reactome" id="R-RNO-5654732">
    <property type="pathway name" value="Negative regulation of FGFR3 signaling"/>
</dbReference>
<dbReference type="Reactome" id="R-RNO-5654733">
    <property type="pathway name" value="Negative regulation of FGFR4 signaling"/>
</dbReference>
<dbReference type="Reactome" id="R-RNO-5673001">
    <property type="pathway name" value="RAF/MAP kinase cascade"/>
</dbReference>
<dbReference type="Reactome" id="R-RNO-6811558">
    <property type="pathway name" value="PI5P, PP2A and IER3 Regulate PI3K/AKT Signaling"/>
</dbReference>
<dbReference type="EvolutionaryTrace" id="P61149"/>
<dbReference type="PRO" id="PR:P61149"/>
<dbReference type="Proteomes" id="UP000002494">
    <property type="component" value="Chromosome 18"/>
</dbReference>
<dbReference type="Bgee" id="ENSRNOG00000013867">
    <property type="expression patterns" value="Expressed in heart and 17 other cell types or tissues"/>
</dbReference>
<dbReference type="GO" id="GO:0005938">
    <property type="term" value="C:cell cortex"/>
    <property type="evidence" value="ECO:0007669"/>
    <property type="project" value="UniProtKB-SubCell"/>
</dbReference>
<dbReference type="GO" id="GO:0005737">
    <property type="term" value="C:cytoplasm"/>
    <property type="evidence" value="ECO:0000318"/>
    <property type="project" value="GO_Central"/>
</dbReference>
<dbReference type="GO" id="GO:0005829">
    <property type="term" value="C:cytosol"/>
    <property type="evidence" value="ECO:0000250"/>
    <property type="project" value="UniProtKB"/>
</dbReference>
<dbReference type="GO" id="GO:0031012">
    <property type="term" value="C:extracellular matrix"/>
    <property type="evidence" value="ECO:0000266"/>
    <property type="project" value="RGD"/>
</dbReference>
<dbReference type="GO" id="GO:0005576">
    <property type="term" value="C:extracellular region"/>
    <property type="evidence" value="ECO:0000250"/>
    <property type="project" value="UniProtKB"/>
</dbReference>
<dbReference type="GO" id="GO:0005615">
    <property type="term" value="C:extracellular space"/>
    <property type="evidence" value="ECO:0000250"/>
    <property type="project" value="UniProtKB"/>
</dbReference>
<dbReference type="GO" id="GO:0005634">
    <property type="term" value="C:nucleus"/>
    <property type="evidence" value="ECO:0000318"/>
    <property type="project" value="GO_Central"/>
</dbReference>
<dbReference type="GO" id="GO:0005104">
    <property type="term" value="F:fibroblast growth factor receptor binding"/>
    <property type="evidence" value="ECO:0000250"/>
    <property type="project" value="UniProtKB"/>
</dbReference>
<dbReference type="GO" id="GO:0008083">
    <property type="term" value="F:growth factor activity"/>
    <property type="evidence" value="ECO:0000314"/>
    <property type="project" value="RGD"/>
</dbReference>
<dbReference type="GO" id="GO:0008201">
    <property type="term" value="F:heparin binding"/>
    <property type="evidence" value="ECO:0000250"/>
    <property type="project" value="UniProtKB"/>
</dbReference>
<dbReference type="GO" id="GO:0030544">
    <property type="term" value="F:Hsp70 protein binding"/>
    <property type="evidence" value="ECO:0000353"/>
    <property type="project" value="RGD"/>
</dbReference>
<dbReference type="GO" id="GO:0005178">
    <property type="term" value="F:integrin binding"/>
    <property type="evidence" value="ECO:0000250"/>
    <property type="project" value="UniProtKB"/>
</dbReference>
<dbReference type="GO" id="GO:0044548">
    <property type="term" value="F:S100 protein binding"/>
    <property type="evidence" value="ECO:0000250"/>
    <property type="project" value="UniProtKB"/>
</dbReference>
<dbReference type="GO" id="GO:0032148">
    <property type="term" value="P:activation of protein kinase B activity"/>
    <property type="evidence" value="ECO:0000250"/>
    <property type="project" value="UniProtKB"/>
</dbReference>
<dbReference type="GO" id="GO:0001525">
    <property type="term" value="P:angiogenesis"/>
    <property type="evidence" value="ECO:0007669"/>
    <property type="project" value="UniProtKB-KW"/>
</dbReference>
<dbReference type="GO" id="GO:0060681">
    <property type="term" value="P:branch elongation involved in ureteric bud branching"/>
    <property type="evidence" value="ECO:0000250"/>
    <property type="project" value="UniProtKB"/>
</dbReference>
<dbReference type="GO" id="GO:0034605">
    <property type="term" value="P:cellular response to heat"/>
    <property type="evidence" value="ECO:0000250"/>
    <property type="project" value="UniProtKB"/>
</dbReference>
<dbReference type="GO" id="GO:0050673">
    <property type="term" value="P:epithelial cell proliferation"/>
    <property type="evidence" value="ECO:0000266"/>
    <property type="project" value="RGD"/>
</dbReference>
<dbReference type="GO" id="GO:0008543">
    <property type="term" value="P:fibroblast growth factor receptor signaling pathway"/>
    <property type="evidence" value="ECO:0000250"/>
    <property type="project" value="UniProtKB"/>
</dbReference>
<dbReference type="GO" id="GO:0030324">
    <property type="term" value="P:lung development"/>
    <property type="evidence" value="ECO:0000266"/>
    <property type="project" value="RGD"/>
</dbReference>
<dbReference type="GO" id="GO:0072163">
    <property type="term" value="P:mesonephric epithelium development"/>
    <property type="evidence" value="ECO:0000250"/>
    <property type="project" value="UniProtKB"/>
</dbReference>
<dbReference type="GO" id="GO:0022008">
    <property type="term" value="P:neurogenesis"/>
    <property type="evidence" value="ECO:0000318"/>
    <property type="project" value="GO_Central"/>
</dbReference>
<dbReference type="GO" id="GO:0001759">
    <property type="term" value="P:organ induction"/>
    <property type="evidence" value="ECO:0000266"/>
    <property type="project" value="RGD"/>
</dbReference>
<dbReference type="GO" id="GO:0045766">
    <property type="term" value="P:positive regulation of angiogenesis"/>
    <property type="evidence" value="ECO:0000250"/>
    <property type="project" value="UniProtKB"/>
</dbReference>
<dbReference type="GO" id="GO:0051781">
    <property type="term" value="P:positive regulation of cell division"/>
    <property type="evidence" value="ECO:0000250"/>
    <property type="project" value="UniProtKB"/>
</dbReference>
<dbReference type="GO" id="GO:0030335">
    <property type="term" value="P:positive regulation of cell migration"/>
    <property type="evidence" value="ECO:0000250"/>
    <property type="project" value="UniProtKB"/>
</dbReference>
<dbReference type="GO" id="GO:0008284">
    <property type="term" value="P:positive regulation of cell population proliferation"/>
    <property type="evidence" value="ECO:0000250"/>
    <property type="project" value="UniProtKB"/>
</dbReference>
<dbReference type="GO" id="GO:0045542">
    <property type="term" value="P:positive regulation of cholesterol biosynthetic process"/>
    <property type="evidence" value="ECO:0000250"/>
    <property type="project" value="UniProtKB"/>
</dbReference>
<dbReference type="GO" id="GO:0010595">
    <property type="term" value="P:positive regulation of endothelial cell migration"/>
    <property type="evidence" value="ECO:0000250"/>
    <property type="project" value="UniProtKB"/>
</dbReference>
<dbReference type="GO" id="GO:0050679">
    <property type="term" value="P:positive regulation of epithelial cell proliferation"/>
    <property type="evidence" value="ECO:0000266"/>
    <property type="project" value="RGD"/>
</dbReference>
<dbReference type="GO" id="GO:0070374">
    <property type="term" value="P:positive regulation of ERK1 and ERK2 cascade"/>
    <property type="evidence" value="ECO:0000250"/>
    <property type="project" value="UniProtKB"/>
</dbReference>
<dbReference type="GO" id="GO:2000347">
    <property type="term" value="P:positive regulation of hepatocyte proliferation"/>
    <property type="evidence" value="ECO:0000314"/>
    <property type="project" value="UniProtKB"/>
</dbReference>
<dbReference type="GO" id="GO:1902533">
    <property type="term" value="P:positive regulation of intracellular signal transduction"/>
    <property type="evidence" value="ECO:0000250"/>
    <property type="project" value="UniProtKB"/>
</dbReference>
<dbReference type="GO" id="GO:0043410">
    <property type="term" value="P:positive regulation of MAPK cascade"/>
    <property type="evidence" value="ECO:0000318"/>
    <property type="project" value="GO_Central"/>
</dbReference>
<dbReference type="GO" id="GO:1903672">
    <property type="term" value="P:positive regulation of sprouting angiogenesis"/>
    <property type="evidence" value="ECO:0000250"/>
    <property type="project" value="UniProtKB"/>
</dbReference>
<dbReference type="GO" id="GO:0045944">
    <property type="term" value="P:positive regulation of transcription by RNA polymerase II"/>
    <property type="evidence" value="ECO:0000250"/>
    <property type="project" value="UniProtKB"/>
</dbReference>
<dbReference type="GO" id="GO:0030334">
    <property type="term" value="P:regulation of cell migration"/>
    <property type="evidence" value="ECO:0000318"/>
    <property type="project" value="GO_Central"/>
</dbReference>
<dbReference type="GO" id="GO:2000544">
    <property type="term" value="P:regulation of endothelial cell chemotaxis to fibroblast growth factor"/>
    <property type="evidence" value="ECO:0000266"/>
    <property type="project" value="RGD"/>
</dbReference>
<dbReference type="GO" id="GO:1901509">
    <property type="term" value="P:regulation of endothelial tube morphogenesis"/>
    <property type="evidence" value="ECO:0000250"/>
    <property type="project" value="UniProtKB"/>
</dbReference>
<dbReference type="GO" id="GO:0042060">
    <property type="term" value="P:wound healing"/>
    <property type="evidence" value="ECO:0000266"/>
    <property type="project" value="RGD"/>
</dbReference>
<dbReference type="CDD" id="cd23313">
    <property type="entry name" value="beta-trefoil_FGF1"/>
    <property type="match status" value="1"/>
</dbReference>
<dbReference type="FunFam" id="2.80.10.50:FF:000020">
    <property type="entry name" value="Fibroblast growth factor 1"/>
    <property type="match status" value="1"/>
</dbReference>
<dbReference type="Gene3D" id="2.80.10.50">
    <property type="match status" value="1"/>
</dbReference>
<dbReference type="InterPro" id="IPR002209">
    <property type="entry name" value="Fibroblast_GF_fam"/>
</dbReference>
<dbReference type="InterPro" id="IPR008996">
    <property type="entry name" value="IL1/FGF"/>
</dbReference>
<dbReference type="PANTHER" id="PTHR11486">
    <property type="entry name" value="FIBROBLAST GROWTH FACTOR"/>
    <property type="match status" value="1"/>
</dbReference>
<dbReference type="Pfam" id="PF00167">
    <property type="entry name" value="FGF"/>
    <property type="match status" value="1"/>
</dbReference>
<dbReference type="PRINTS" id="PR00263">
    <property type="entry name" value="HBGFFGF"/>
</dbReference>
<dbReference type="PRINTS" id="PR00262">
    <property type="entry name" value="IL1HBGF"/>
</dbReference>
<dbReference type="SMART" id="SM00442">
    <property type="entry name" value="FGF"/>
    <property type="match status" value="1"/>
</dbReference>
<dbReference type="SUPFAM" id="SSF50353">
    <property type="entry name" value="Cytokine"/>
    <property type="match status" value="1"/>
</dbReference>
<dbReference type="PROSITE" id="PS00247">
    <property type="entry name" value="HBGF_FGF"/>
    <property type="match status" value="1"/>
</dbReference>
<reference key="1">
    <citation type="journal article" date="1989" name="Nucleic Acids Res.">
        <title>The nucleotide sequence of rat heparin binding growth factor 1 (HBGF-1).</title>
        <authorList>
            <person name="Goodrich S."/>
            <person name="Yan G.C."/>
            <person name="Bahrenburg K."/>
            <person name="Mansson P.E."/>
        </authorList>
    </citation>
    <scope>NUCLEOTIDE SEQUENCE [MRNA]</scope>
</reference>
<reference key="2">
    <citation type="journal article" date="2005" name="J. Lipid Res.">
        <title>Astrocytes produce and secrete FGF-1, which promotes the production of apoE-HDL in a manner of autocrine action.</title>
        <authorList>
            <person name="Ito J."/>
            <person name="Nagayasu Y."/>
            <person name="Lu R."/>
            <person name="Kheirollah A."/>
            <person name="Hayashi M."/>
            <person name="Yokoyama S."/>
        </authorList>
    </citation>
    <scope>SUBCELLULAR LOCATION</scope>
</reference>
<reference key="3">
    <citation type="journal article" date="2012" name="Nat. Commun.">
        <title>Quantitative maps of protein phosphorylation sites across 14 different rat organs and tissues.</title>
        <authorList>
            <person name="Lundby A."/>
            <person name="Secher A."/>
            <person name="Lage K."/>
            <person name="Nordsborg N.B."/>
            <person name="Dmytriyev A."/>
            <person name="Lundby C."/>
            <person name="Olsen J.V."/>
        </authorList>
    </citation>
    <scope>IDENTIFICATION BY MASS SPECTROMETRY [LARGE SCALE ANALYSIS]</scope>
</reference>
<reference key="4">
    <citation type="journal article" date="2007" name="Acta Crystallogr. F">
        <title>Structure of rat acidic fibroblast growth factor at 1.4 A resolution.</title>
        <authorList>
            <person name="Kulahin N."/>
            <person name="Kiselyov V."/>
            <person name="Kochoyan A."/>
            <person name="Kristensen O."/>
            <person name="Kastrup J.S."/>
            <person name="Berezin V."/>
            <person name="Bock E."/>
            <person name="Gajhede M."/>
        </authorList>
    </citation>
    <scope>X-RAY CRYSTALLOGRAPHY (1.4 ANGSTROMS) OF 22-155</scope>
</reference>
<reference key="5">
    <citation type="journal article" date="2008" name="Acta Crystallogr. F">
        <title>Dimerization effect of sucrose octasulfate on rat FGF1.</title>
        <authorList>
            <person name="Kulahin N."/>
            <person name="Kiselyov V."/>
            <person name="Kochoyan A."/>
            <person name="Kristensen O."/>
            <person name="Kastrup J.S."/>
            <person name="Berezin V."/>
            <person name="Bock E."/>
            <person name="Gajhede M."/>
        </authorList>
    </citation>
    <scope>X-RAY CRYSTALLOGRAPHY (2.2 ANGSTROMS) OF 22-153</scope>
</reference>
<protein>
    <recommendedName>
        <fullName>Fibroblast growth factor 1</fullName>
        <shortName>FGF-1</shortName>
    </recommendedName>
    <alternativeName>
        <fullName>Acidic fibroblast growth factor</fullName>
        <shortName>aFGF</shortName>
    </alternativeName>
    <alternativeName>
        <fullName>Heparin-binding growth factor 1</fullName>
        <shortName>HBGF-1</shortName>
    </alternativeName>
</protein>
<name>FGF1_RAT</name>
<evidence type="ECO:0000250" key="1"/>
<evidence type="ECO:0000250" key="2">
    <source>
        <dbReference type="UniProtKB" id="P03968"/>
    </source>
</evidence>
<evidence type="ECO:0000250" key="3">
    <source>
        <dbReference type="UniProtKB" id="P05230"/>
    </source>
</evidence>
<evidence type="ECO:0000269" key="4">
    <source>
    </source>
</evidence>
<evidence type="ECO:0000305" key="5"/>
<evidence type="ECO:0007829" key="6">
    <source>
        <dbReference type="PDB" id="2J3P"/>
    </source>
</evidence>
<evidence type="ECO:0007829" key="7">
    <source>
        <dbReference type="PDB" id="2UUS"/>
    </source>
</evidence>
<sequence length="155" mass="17418">MAEGEITTFAALTERFNLPLGNYKKPKLLYCSNGGHFLRILPDGTVDGTRDRSDQHIQLQLSAESAGEVYIKGTETGQYLAMDTEGLLYGSQTPNEECLFLERLEENHYNTYTSKKHAEKNWFVGLKKNGSCKRGPRTHYGQKAILFLPLPVSSD</sequence>
<accession>P61149</accession>
<accession>P10935</accession>